<feature type="transit peptide" description="Mitochondrion" evidence="3">
    <location>
        <begin position="1"/>
        <end position="24"/>
    </location>
</feature>
<feature type="chain" id="PRO_0000445310" description="ATP synthase subunit alpha, mitochondrial" evidence="6">
    <location>
        <begin position="25"/>
        <end position="536"/>
    </location>
</feature>
<feature type="binding site" evidence="4 11">
    <location>
        <begin position="195"/>
        <end position="202"/>
    </location>
    <ligand>
        <name>ATP</name>
        <dbReference type="ChEBI" id="CHEBI:30616"/>
    </ligand>
</feature>
<feature type="strand" evidence="12">
    <location>
        <begin position="52"/>
        <end position="61"/>
    </location>
</feature>
<feature type="strand" evidence="12">
    <location>
        <begin position="64"/>
        <end position="69"/>
    </location>
</feature>
<feature type="strand" evidence="12">
    <location>
        <begin position="77"/>
        <end position="80"/>
    </location>
</feature>
<feature type="strand" evidence="12">
    <location>
        <begin position="86"/>
        <end position="92"/>
    </location>
</feature>
<feature type="strand" evidence="12">
    <location>
        <begin position="97"/>
        <end position="103"/>
    </location>
</feature>
<feature type="strand" evidence="12">
    <location>
        <begin position="113"/>
        <end position="120"/>
    </location>
</feature>
<feature type="strand" evidence="12">
    <location>
        <begin position="122"/>
        <end position="126"/>
    </location>
</feature>
<feature type="helix" evidence="12">
    <location>
        <begin position="127"/>
        <end position="129"/>
    </location>
</feature>
<feature type="strand" evidence="12">
    <location>
        <begin position="136"/>
        <end position="138"/>
    </location>
</feature>
<feature type="strand" evidence="12">
    <location>
        <begin position="150"/>
        <end position="156"/>
    </location>
</feature>
<feature type="helix" evidence="12">
    <location>
        <begin position="177"/>
        <end position="182"/>
    </location>
</feature>
<feature type="strand" evidence="12">
    <location>
        <begin position="192"/>
        <end position="196"/>
    </location>
</feature>
<feature type="helix" evidence="12">
    <location>
        <begin position="201"/>
        <end position="211"/>
    </location>
</feature>
<feature type="helix" evidence="12">
    <location>
        <begin position="212"/>
        <end position="214"/>
    </location>
</feature>
<feature type="turn" evidence="12">
    <location>
        <begin position="215"/>
        <end position="217"/>
    </location>
</feature>
<feature type="strand" evidence="12">
    <location>
        <begin position="226"/>
        <end position="233"/>
    </location>
</feature>
<feature type="helix" evidence="12">
    <location>
        <begin position="236"/>
        <end position="247"/>
    </location>
</feature>
<feature type="turn" evidence="12">
    <location>
        <begin position="248"/>
        <end position="250"/>
    </location>
</feature>
<feature type="strand" evidence="12">
    <location>
        <begin position="256"/>
        <end position="260"/>
    </location>
</feature>
<feature type="helix" evidence="12">
    <location>
        <begin position="266"/>
        <end position="285"/>
    </location>
</feature>
<feature type="strand" evidence="12">
    <location>
        <begin position="289"/>
        <end position="295"/>
    </location>
</feature>
<feature type="helix" evidence="12">
    <location>
        <begin position="298"/>
        <end position="310"/>
    </location>
</feature>
<feature type="helix" evidence="12">
    <location>
        <begin position="317"/>
        <end position="319"/>
    </location>
</feature>
<feature type="helix" evidence="12">
    <location>
        <begin position="322"/>
        <end position="324"/>
    </location>
</feature>
<feature type="helix" evidence="12">
    <location>
        <begin position="325"/>
        <end position="332"/>
    </location>
</feature>
<feature type="helix" evidence="12">
    <location>
        <begin position="340"/>
        <end position="342"/>
    </location>
</feature>
<feature type="strand" evidence="12">
    <location>
        <begin position="346"/>
        <end position="354"/>
    </location>
</feature>
<feature type="strand" evidence="12">
    <location>
        <begin position="356"/>
        <end position="358"/>
    </location>
</feature>
<feature type="helix" evidence="12">
    <location>
        <begin position="363"/>
        <end position="369"/>
    </location>
</feature>
<feature type="strand" evidence="12">
    <location>
        <begin position="372"/>
        <end position="378"/>
    </location>
</feature>
<feature type="helix" evidence="12">
    <location>
        <begin position="380"/>
        <end position="385"/>
    </location>
</feature>
<feature type="turn" evidence="12">
    <location>
        <begin position="393"/>
        <end position="395"/>
    </location>
</feature>
<feature type="strand" evidence="12">
    <location>
        <begin position="402"/>
        <end position="405"/>
    </location>
</feature>
<feature type="helix" evidence="12">
    <location>
        <begin position="407"/>
        <end position="409"/>
    </location>
</feature>
<feature type="turn" evidence="12">
    <location>
        <begin position="410"/>
        <end position="412"/>
    </location>
</feature>
<feature type="helix" evidence="12">
    <location>
        <begin position="414"/>
        <end position="419"/>
    </location>
</feature>
<feature type="turn" evidence="12">
    <location>
        <begin position="420"/>
        <end position="423"/>
    </location>
</feature>
<feature type="helix" evidence="12">
    <location>
        <begin position="424"/>
        <end position="428"/>
    </location>
</feature>
<feature type="strand" evidence="12">
    <location>
        <begin position="429"/>
        <end position="432"/>
    </location>
</feature>
<feature type="helix" evidence="12">
    <location>
        <begin position="438"/>
        <end position="453"/>
    </location>
</feature>
<feature type="helix" evidence="12">
    <location>
        <begin position="464"/>
        <end position="476"/>
    </location>
</feature>
<feature type="strand" evidence="12">
    <location>
        <begin position="478"/>
        <end position="482"/>
    </location>
</feature>
<feature type="turn" evidence="12">
    <location>
        <begin position="484"/>
        <end position="486"/>
    </location>
</feature>
<feature type="helix" evidence="12">
    <location>
        <begin position="487"/>
        <end position="492"/>
    </location>
</feature>
<feature type="helix" evidence="12">
    <location>
        <begin position="495"/>
        <end position="501"/>
    </location>
</feature>
<feature type="helix" evidence="12">
    <location>
        <begin position="503"/>
        <end position="509"/>
    </location>
</feature>
<feature type="helix" evidence="12">
    <location>
        <begin position="517"/>
        <end position="527"/>
    </location>
</feature>
<comment type="function">
    <text evidence="3 4">Mitochondrial membrane ATP synthase (F(1)F(0) ATP synthase or Complex V) produces ATP from ADP in the presence of a proton gradient across the membrane which is generated by electron transport complexes of the respiratory chain (PubMed:25759169). F-type ATP synthases consist of two structural domains, F(1) - containing the extramembraneous catalytic core, and F(0) - containing the membrane proton channel, linked together by a central stalk and a peripheral stalk (PubMed:27373333). During catalysis, ATP synthesis in the catalytic domain of F(1) is coupled via a rotary mechanism of the central stalk subunits to proton translocation (PubMed:27373333). Subunits alpha/ATP1 and beta/ATP2 form the catalytic core in F(1) (PubMed:27373333). Rotation of the central stalk against the surrounding alpha/ATP1(3)beta/ATP2(3) subunits leads to hydrolysis of ATP in three separate catalytic sites on the beta/ATP2 subunits (PubMed:27373333). Subunit alpha/ATP1 does not bear the catalytic high-affinity ATP-binding sites (PubMed:27373333).</text>
</comment>
<comment type="subunit">
    <text evidence="3 4">F-type ATP synthases have 2 components, the catalytic core F(1) and the membrane-embedded component F(0), linked together by a central stalk and a peripheral stalk (PubMed:27373333). The central stalk, also called rotor shaft, is often seen as part of F(1) (PubMed:27373333). The peripheral stalk is seen as part of F(0) (PubMed:27373333). F(0) contains the membrane channel next to the rotor (PubMed:27373333). F-type ATP synthases form dimers but each monomer functions independently in ATP generation (PubMed:27373333). The dimer consists of 17 different polypeptides: ATP1 (subunit alpha, 3 molecules per monomer, part of F(1)), ATP2 (subunit beta, 3 copies per monomer, part of F(1)), ATP3 (subunit gamma, part of the central stalk), ATP4 (subunit b, part of the peripheral stalk), ATP5/OSCP (subunit 5/OSCP, part of the peripheral stalk), ATP6 (subunit a, part of the peripheral stalk), ATP7 (subunit d, part of the peripheral stalk), ATP8 (subunit 8, part of the peripheral stalk), OLI1 (subunit c, part of the rotor, 10 molecules per monomer), ATP14 (subunit h, part of the peripheral stalk), ATP15 (subunit epsilon, part of the central stalk), ATP16 (subunit delta, part of the central stalk), ATP17 (subunit f, part of the peripheral stalk), ATP18 (subunit i/j, part of the peripheral stalk), ATP19 (subunit k, dimer-specific, at interface between monomers), ATP20 (subunit g, at interface between monomers), TIM11 (subunit e, at interface between monomers) (PubMed:25759169, PubMed:27373333).</text>
</comment>
<comment type="subcellular location">
    <subcellularLocation>
        <location evidence="7">Mitochondrion inner membrane</location>
        <topology evidence="7">Peripheral membrane protein</topology>
        <orientation evidence="7">Matrix side</orientation>
    </subcellularLocation>
    <text evidence="7">The F-type ATP synthase complex is anchored in the mitochondrial inner membrane via the F(0) domain with the F(1) domain and the peripheral stalk extending into the mitochondrial matrix.</text>
</comment>
<comment type="mass spectrometry"/>
<comment type="similarity">
    <text evidence="2">Belongs to the ATPase alpha/beta chains family.</text>
</comment>
<name>ATPA_YARLI</name>
<proteinExistence type="evidence at protein level"/>
<organism evidence="10">
    <name type="scientific">Yarrowia lipolytica (strain CLIB 122 / E 150)</name>
    <name type="common">Yeast</name>
    <name type="synonym">Candida lipolytica</name>
    <dbReference type="NCBI Taxonomy" id="284591"/>
    <lineage>
        <taxon>Eukaryota</taxon>
        <taxon>Fungi</taxon>
        <taxon>Dikarya</taxon>
        <taxon>Ascomycota</taxon>
        <taxon>Saccharomycotina</taxon>
        <taxon>Dipodascomycetes</taxon>
        <taxon>Dipodascales</taxon>
        <taxon>Dipodascales incertae sedis</taxon>
        <taxon>Yarrowia</taxon>
    </lineage>
</organism>
<protein>
    <recommendedName>
        <fullName evidence="1">ATP synthase subunit alpha, mitochondrial</fullName>
    </recommendedName>
</protein>
<evidence type="ECO:0000250" key="1">
    <source>
        <dbReference type="UniProtKB" id="P07251"/>
    </source>
</evidence>
<evidence type="ECO:0000255" key="2">
    <source>
        <dbReference type="RuleBase" id="RU000339"/>
    </source>
</evidence>
<evidence type="ECO:0000269" key="3">
    <source>
    </source>
</evidence>
<evidence type="ECO:0000269" key="4">
    <source>
    </source>
</evidence>
<evidence type="ECO:0000303" key="5">
    <source>
    </source>
</evidence>
<evidence type="ECO:0000305" key="6"/>
<evidence type="ECO:0000305" key="7">
    <source>
    </source>
</evidence>
<evidence type="ECO:0000312" key="8">
    <source>
        <dbReference type="EMBL" id="CAG77741.1"/>
    </source>
</evidence>
<evidence type="ECO:0000312" key="9">
    <source>
        <dbReference type="PDB" id="5FL7"/>
    </source>
</evidence>
<evidence type="ECO:0000312" key="10">
    <source>
        <dbReference type="Proteomes" id="UP000001300"/>
    </source>
</evidence>
<evidence type="ECO:0007744" key="11">
    <source>
        <dbReference type="PDB" id="5FL7"/>
    </source>
</evidence>
<evidence type="ECO:0007829" key="12">
    <source>
        <dbReference type="PDB" id="5FL7"/>
    </source>
</evidence>
<accession>Q6C326</accession>
<sequence>MFKNALRRAGVAAPRISRVAQRGYAEAKATPTEVTSILEERIRGVSGEANLNETGRVLSVGDGIARVFGLNNIQAEELVEFASGVKGMALNLEAGQVGIVLFGSDRLVKEGETVKRSGSIVDVPVGPALLGRVVDALGNPIDGKGPIETEFRIRAQVKAPGILPRTSVNEPMQTGLKAVDALVPIGRGQRELIIGDRQTGKTQIAIDTILNQKRWNYGQDEKKKLYCVYVAVGQKRSTVAQLVQTLEHHDALKYSIIVAATASEAAPLQYLAPFTGTAMGEWFRDNGKGALIVFDDLSKQAVAYRQMSLLLRRPPGREAYPGDVFYLHSRLLERAAKMNEREGGGSLTALPIIETQGGDVSAYIPTNVISITDGQIFLEAELFYKGIRPAINVGLSVSRVGSAAQVKAMKQVAGSLKLFLAQYREVAAFAQFGSDLDASTKQTLTRGERLTLLLKQKQASPMSSEEMVPLIYAGVNGYIDNIPVKQVEKFEAEFVSYLHANESDLLKDIAATGELSKENLEKLKSITENFVGSFAK</sequence>
<keyword id="KW-0002">3D-structure</keyword>
<keyword id="KW-0066">ATP synthesis</keyword>
<keyword id="KW-0067">ATP-binding</keyword>
<keyword id="KW-0139">CF(1)</keyword>
<keyword id="KW-0903">Direct protein sequencing</keyword>
<keyword id="KW-0375">Hydrogen ion transport</keyword>
<keyword id="KW-0406">Ion transport</keyword>
<keyword id="KW-0472">Membrane</keyword>
<keyword id="KW-0496">Mitochondrion</keyword>
<keyword id="KW-0999">Mitochondrion inner membrane</keyword>
<keyword id="KW-0547">Nucleotide-binding</keyword>
<keyword id="KW-1185">Reference proteome</keyword>
<keyword id="KW-0809">Transit peptide</keyword>
<keyword id="KW-0813">Transport</keyword>
<reference evidence="10" key="1">
    <citation type="journal article" date="2004" name="Nature">
        <title>Genome evolution in yeasts.</title>
        <authorList>
            <person name="Dujon B."/>
            <person name="Sherman D."/>
            <person name="Fischer G."/>
            <person name="Durrens P."/>
            <person name="Casaregola S."/>
            <person name="Lafontaine I."/>
            <person name="de Montigny J."/>
            <person name="Marck C."/>
            <person name="Neuveglise C."/>
            <person name="Talla E."/>
            <person name="Goffard N."/>
            <person name="Frangeul L."/>
            <person name="Aigle M."/>
            <person name="Anthouard V."/>
            <person name="Babour A."/>
            <person name="Barbe V."/>
            <person name="Barnay S."/>
            <person name="Blanchin S."/>
            <person name="Beckerich J.-M."/>
            <person name="Beyne E."/>
            <person name="Bleykasten C."/>
            <person name="Boisrame A."/>
            <person name="Boyer J."/>
            <person name="Cattolico L."/>
            <person name="Confanioleri F."/>
            <person name="de Daruvar A."/>
            <person name="Despons L."/>
            <person name="Fabre E."/>
            <person name="Fairhead C."/>
            <person name="Ferry-Dumazet H."/>
            <person name="Groppi A."/>
            <person name="Hantraye F."/>
            <person name="Hennequin C."/>
            <person name="Jauniaux N."/>
            <person name="Joyet P."/>
            <person name="Kachouri R."/>
            <person name="Kerrest A."/>
            <person name="Koszul R."/>
            <person name="Lemaire M."/>
            <person name="Lesur I."/>
            <person name="Ma L."/>
            <person name="Muller H."/>
            <person name="Nicaud J.-M."/>
            <person name="Nikolski M."/>
            <person name="Oztas S."/>
            <person name="Ozier-Kalogeropoulos O."/>
            <person name="Pellenz S."/>
            <person name="Potier S."/>
            <person name="Richard G.-F."/>
            <person name="Straub M.-L."/>
            <person name="Suleau A."/>
            <person name="Swennen D."/>
            <person name="Tekaia F."/>
            <person name="Wesolowski-Louvel M."/>
            <person name="Westhof E."/>
            <person name="Wirth B."/>
            <person name="Zeniou-Meyer M."/>
            <person name="Zivanovic Y."/>
            <person name="Bolotin-Fukuhara M."/>
            <person name="Thierry A."/>
            <person name="Bouchier C."/>
            <person name="Caudron B."/>
            <person name="Scarpelli C."/>
            <person name="Gaillardin C."/>
            <person name="Weissenbach J."/>
            <person name="Wincker P."/>
            <person name="Souciet J.-L."/>
        </authorList>
    </citation>
    <scope>NUCLEOTIDE SEQUENCE [LARGE SCALE GENOMIC DNA]</scope>
    <source>
        <strain>CLIB 122 / E 150</strain>
    </source>
</reference>
<reference evidence="6" key="2">
    <citation type="journal article" date="2015" name="Biochem. J.">
        <title>The purification and characterization of ATP synthase complexes from the mitochondria of four fungal species.</title>
        <authorList>
            <person name="Liu S."/>
            <person name="Charlesworth T.J."/>
            <person name="Bason J.V."/>
            <person name="Montgomery M.G."/>
            <person name="Harbour M.E."/>
            <person name="Fearnley I.M."/>
            <person name="Walker J.E."/>
        </authorList>
    </citation>
    <scope>PROTEIN SEQUENCE OF 25-28</scope>
    <scope>IDENTIFICATION IN ATP SYNTHASE COMPLEX</scope>
    <scope>FUNCTION OF ATP SYNTHASE COMPLEX</scope>
    <scope>SUBUNIT</scope>
    <scope>SUBCELLULAR LOCATION</scope>
    <scope>MASS SPECTROMETRY</scope>
    <scope>IDENTIFICATION BY MASS SPECTROMETRY</scope>
    <source>
        <strain evidence="5">CLIB 122 / E 150</strain>
    </source>
</reference>
<reference evidence="9" key="3">
    <citation type="journal article" date="2016" name="Mol. Cell">
        <title>Structure of a Complete ATP Synthase Dimer Reveals the Molecular Basis of Inner Mitochondrial Membrane Morphology.</title>
        <authorList>
            <person name="Hahn A."/>
            <person name="Parey K."/>
            <person name="Bublitz M."/>
            <person name="Mills D.J."/>
            <person name="Zickermann V."/>
            <person name="Vonck J."/>
            <person name="Kuehlbrandt W."/>
            <person name="Meier T."/>
        </authorList>
    </citation>
    <scope>X-RAY CRYSTALLOGRAPHY (3.5 ANGSTROMS) OF ATP SYNTHASE F1C10 COMPLEX</scope>
    <scope>STRUCTURE BY ELECTRON MICROSCOPY (7.7 ANGSTROMS) OF DIMERIC ATP SYNTHASE COMPLEX</scope>
    <scope>FUNCTION</scope>
    <scope>SUBUNIT</scope>
    <scope>SUBCELLULAR LOCATION</scope>
    <scope>IDENTIFICATION BY MASS SPECTROMETRY</scope>
</reference>
<dbReference type="EMBL" id="CR382132">
    <property type="protein sequence ID" value="CAG77741.1"/>
    <property type="molecule type" value="Genomic_DNA"/>
</dbReference>
<dbReference type="RefSeq" id="XP_504936.1">
    <property type="nucleotide sequence ID" value="XM_504936.1"/>
</dbReference>
<dbReference type="PDB" id="5FL7">
    <property type="method" value="X-ray"/>
    <property type="resolution" value="3.50 A"/>
    <property type="chains" value="A/B/C=1-536"/>
</dbReference>
<dbReference type="PDBsum" id="5FL7"/>
<dbReference type="SMR" id="Q6C326"/>
<dbReference type="FunCoup" id="Q6C326">
    <property type="interactions" value="1039"/>
</dbReference>
<dbReference type="STRING" id="284591.Q6C326"/>
<dbReference type="EnsemblFungi" id="CAG77741">
    <property type="protein sequence ID" value="CAG77741"/>
    <property type="gene ID" value="YALI0_F03179g"/>
</dbReference>
<dbReference type="KEGG" id="yli:2907749"/>
<dbReference type="VEuPathDB" id="FungiDB:YALI0_F03179g"/>
<dbReference type="HOGENOM" id="CLU_010091_2_1_1"/>
<dbReference type="InParanoid" id="Q6C326"/>
<dbReference type="OMA" id="INQRDNW"/>
<dbReference type="OrthoDB" id="108520at4891"/>
<dbReference type="Proteomes" id="UP000001300">
    <property type="component" value="Chromosome F"/>
</dbReference>
<dbReference type="GO" id="GO:0005743">
    <property type="term" value="C:mitochondrial inner membrane"/>
    <property type="evidence" value="ECO:0007669"/>
    <property type="project" value="UniProtKB-SubCell"/>
</dbReference>
<dbReference type="GO" id="GO:0045259">
    <property type="term" value="C:proton-transporting ATP synthase complex"/>
    <property type="evidence" value="ECO:0007669"/>
    <property type="project" value="UniProtKB-KW"/>
</dbReference>
<dbReference type="GO" id="GO:0043531">
    <property type="term" value="F:ADP binding"/>
    <property type="evidence" value="ECO:0000318"/>
    <property type="project" value="GO_Central"/>
</dbReference>
<dbReference type="GO" id="GO:0005524">
    <property type="term" value="F:ATP binding"/>
    <property type="evidence" value="ECO:0000318"/>
    <property type="project" value="GO_Central"/>
</dbReference>
<dbReference type="GO" id="GO:0046933">
    <property type="term" value="F:proton-transporting ATP synthase activity, rotational mechanism"/>
    <property type="evidence" value="ECO:0007669"/>
    <property type="project" value="InterPro"/>
</dbReference>
<dbReference type="GO" id="GO:0015986">
    <property type="term" value="P:proton motive force-driven ATP synthesis"/>
    <property type="evidence" value="ECO:0000318"/>
    <property type="project" value="GO_Central"/>
</dbReference>
<dbReference type="CDD" id="cd18113">
    <property type="entry name" value="ATP-synt_F1_alpha_C"/>
    <property type="match status" value="1"/>
</dbReference>
<dbReference type="CDD" id="cd18116">
    <property type="entry name" value="ATP-synt_F1_alpha_N"/>
    <property type="match status" value="1"/>
</dbReference>
<dbReference type="CDD" id="cd01132">
    <property type="entry name" value="F1-ATPase_alpha_CD"/>
    <property type="match status" value="1"/>
</dbReference>
<dbReference type="FunFam" id="1.20.150.20:FF:000001">
    <property type="entry name" value="ATP synthase subunit alpha"/>
    <property type="match status" value="1"/>
</dbReference>
<dbReference type="FunFam" id="2.40.30.20:FF:000001">
    <property type="entry name" value="ATP synthase subunit alpha"/>
    <property type="match status" value="1"/>
</dbReference>
<dbReference type="FunFam" id="3.40.50.300:FF:004039">
    <property type="entry name" value="ATP synthase subunit alpha, mitochondrial"/>
    <property type="match status" value="1"/>
</dbReference>
<dbReference type="Gene3D" id="2.40.30.20">
    <property type="match status" value="1"/>
</dbReference>
<dbReference type="Gene3D" id="1.20.150.20">
    <property type="entry name" value="ATP synthase alpha/beta chain, C-terminal domain"/>
    <property type="match status" value="1"/>
</dbReference>
<dbReference type="Gene3D" id="3.40.50.300">
    <property type="entry name" value="P-loop containing nucleotide triphosphate hydrolases"/>
    <property type="match status" value="1"/>
</dbReference>
<dbReference type="HAMAP" id="MF_01346">
    <property type="entry name" value="ATP_synth_alpha_bact"/>
    <property type="match status" value="1"/>
</dbReference>
<dbReference type="InterPro" id="IPR023366">
    <property type="entry name" value="ATP_synth_asu-like_sf"/>
</dbReference>
<dbReference type="InterPro" id="IPR000793">
    <property type="entry name" value="ATP_synth_asu_C"/>
</dbReference>
<dbReference type="InterPro" id="IPR038376">
    <property type="entry name" value="ATP_synth_asu_C_sf"/>
</dbReference>
<dbReference type="InterPro" id="IPR033732">
    <property type="entry name" value="ATP_synth_F1_a_nt-bd_dom"/>
</dbReference>
<dbReference type="InterPro" id="IPR005294">
    <property type="entry name" value="ATP_synth_F1_asu"/>
</dbReference>
<dbReference type="InterPro" id="IPR020003">
    <property type="entry name" value="ATPase_a/bsu_AS"/>
</dbReference>
<dbReference type="InterPro" id="IPR004100">
    <property type="entry name" value="ATPase_F1/V1/A1_a/bsu_N"/>
</dbReference>
<dbReference type="InterPro" id="IPR036121">
    <property type="entry name" value="ATPase_F1/V1/A1_a/bsu_N_sf"/>
</dbReference>
<dbReference type="InterPro" id="IPR000194">
    <property type="entry name" value="ATPase_F1/V1/A1_a/bsu_nucl-bd"/>
</dbReference>
<dbReference type="InterPro" id="IPR027417">
    <property type="entry name" value="P-loop_NTPase"/>
</dbReference>
<dbReference type="NCBIfam" id="TIGR00962">
    <property type="entry name" value="atpA"/>
    <property type="match status" value="1"/>
</dbReference>
<dbReference type="NCBIfam" id="NF009884">
    <property type="entry name" value="PRK13343.1"/>
    <property type="match status" value="1"/>
</dbReference>
<dbReference type="PANTHER" id="PTHR48082">
    <property type="entry name" value="ATP SYNTHASE SUBUNIT ALPHA, MITOCHONDRIAL"/>
    <property type="match status" value="1"/>
</dbReference>
<dbReference type="PANTHER" id="PTHR48082:SF2">
    <property type="entry name" value="ATP SYNTHASE SUBUNIT ALPHA, MITOCHONDRIAL"/>
    <property type="match status" value="1"/>
</dbReference>
<dbReference type="Pfam" id="PF00006">
    <property type="entry name" value="ATP-synt_ab"/>
    <property type="match status" value="1"/>
</dbReference>
<dbReference type="Pfam" id="PF00306">
    <property type="entry name" value="ATP-synt_ab_C"/>
    <property type="match status" value="1"/>
</dbReference>
<dbReference type="Pfam" id="PF02874">
    <property type="entry name" value="ATP-synt_ab_N"/>
    <property type="match status" value="1"/>
</dbReference>
<dbReference type="PIRSF" id="PIRSF039088">
    <property type="entry name" value="F_ATPase_subunit_alpha"/>
    <property type="match status" value="1"/>
</dbReference>
<dbReference type="SUPFAM" id="SSF47917">
    <property type="entry name" value="C-terminal domain of alpha and beta subunits of F1 ATP synthase"/>
    <property type="match status" value="1"/>
</dbReference>
<dbReference type="SUPFAM" id="SSF50615">
    <property type="entry name" value="N-terminal domain of alpha and beta subunits of F1 ATP synthase"/>
    <property type="match status" value="1"/>
</dbReference>
<dbReference type="SUPFAM" id="SSF52540">
    <property type="entry name" value="P-loop containing nucleoside triphosphate hydrolases"/>
    <property type="match status" value="1"/>
</dbReference>
<dbReference type="PROSITE" id="PS00152">
    <property type="entry name" value="ATPASE_ALPHA_BETA"/>
    <property type="match status" value="1"/>
</dbReference>
<gene>
    <name evidence="1" type="primary">ATP1</name>
    <name evidence="8" type="ordered locus">YALI0_F03179g</name>
</gene>